<sequence length="162" mass="17771">MKRLLSAIVFPAMFISISNVYALDIQPGEWKMENIEMRTINPDTKEVLMDEKNSGIATLMCYTPKMSEDSKKMVKGFSTSAGGCTTTFVESTDTKLINETVCNNPDVKSHSIVETTKISDTEFAMTMKSDVDAGGNKTTSINKIKQTFVGKTCSEASKGVKQ</sequence>
<reference key="1">
    <citation type="journal article" date="1993" name="J. Bacteriol.">
        <title>Isolation of the gene (miaE) encoding the hydroxylase involved in the synthesis of 2-methylthio-cis-ribozeatin in tRNA of Salmonella typhimurium and characterization of mutants.</title>
        <authorList>
            <person name="Persson B.C."/>
            <person name="Bjoerk G.R."/>
        </authorList>
    </citation>
    <scope>NUCLEOTIDE SEQUENCE [GENOMIC DNA]</scope>
    <source>
        <strain>LT2</strain>
    </source>
</reference>
<reference key="2">
    <citation type="journal article" date="2001" name="Nature">
        <title>Complete genome sequence of Salmonella enterica serovar Typhimurium LT2.</title>
        <authorList>
            <person name="McClelland M."/>
            <person name="Sanderson K.E."/>
            <person name="Spieth J."/>
            <person name="Clifton S.W."/>
            <person name="Latreille P."/>
            <person name="Courtney L."/>
            <person name="Porwollik S."/>
            <person name="Ali J."/>
            <person name="Dante M."/>
            <person name="Du F."/>
            <person name="Hou S."/>
            <person name="Layman D."/>
            <person name="Leonard S."/>
            <person name="Nguyen C."/>
            <person name="Scott K."/>
            <person name="Holmes A."/>
            <person name="Grewal N."/>
            <person name="Mulvaney E."/>
            <person name="Ryan E."/>
            <person name="Sun H."/>
            <person name="Florea L."/>
            <person name="Miller W."/>
            <person name="Stoneking T."/>
            <person name="Nhan M."/>
            <person name="Waterston R."/>
            <person name="Wilson R.K."/>
        </authorList>
    </citation>
    <scope>NUCLEOTIDE SEQUENCE [LARGE SCALE GENOMIC DNA]</scope>
    <source>
        <strain>LT2 / SGSC1412 / ATCC 700720</strain>
    </source>
</reference>
<organism>
    <name type="scientific">Salmonella typhimurium (strain LT2 / SGSC1412 / ATCC 700720)</name>
    <dbReference type="NCBI Taxonomy" id="99287"/>
    <lineage>
        <taxon>Bacteria</taxon>
        <taxon>Pseudomonadati</taxon>
        <taxon>Pseudomonadota</taxon>
        <taxon>Gammaproteobacteria</taxon>
        <taxon>Enterobacterales</taxon>
        <taxon>Enterobacteriaceae</taxon>
        <taxon>Salmonella</taxon>
    </lineage>
</organism>
<keyword id="KW-1185">Reference proteome</keyword>
<protein>
    <recommendedName>
        <fullName>Uncharacterized protein YtgA</fullName>
    </recommendedName>
</protein>
<dbReference type="EMBL" id="X73368">
    <property type="protein sequence ID" value="CAA51783.1"/>
    <property type="molecule type" value="Genomic_DNA"/>
</dbReference>
<dbReference type="EMBL" id="AE006468">
    <property type="protein sequence ID" value="AAL23291.1"/>
    <property type="molecule type" value="Genomic_DNA"/>
</dbReference>
<dbReference type="PIR" id="S34362">
    <property type="entry name" value="S34362"/>
</dbReference>
<dbReference type="RefSeq" id="NP_463332.1">
    <property type="nucleotide sequence ID" value="NC_003197.2"/>
</dbReference>
<dbReference type="RefSeq" id="WP_000826193.1">
    <property type="nucleotide sequence ID" value="NC_003197.2"/>
</dbReference>
<dbReference type="STRING" id="99287.STM4472"/>
<dbReference type="PaxDb" id="99287-STM4472"/>
<dbReference type="GeneID" id="1255998"/>
<dbReference type="KEGG" id="stm:STM4472"/>
<dbReference type="PATRIC" id="fig|99287.12.peg.4708"/>
<dbReference type="HOGENOM" id="CLU_1719780_0_0_6"/>
<dbReference type="OMA" id="GSHSAMA"/>
<dbReference type="BioCyc" id="SENT99287:STM4472-MONOMER"/>
<dbReference type="Proteomes" id="UP000001014">
    <property type="component" value="Chromosome"/>
</dbReference>
<dbReference type="InterPro" id="IPR022061">
    <property type="entry name" value="DUF3617"/>
</dbReference>
<dbReference type="Pfam" id="PF12276">
    <property type="entry name" value="DUF3617"/>
    <property type="match status" value="1"/>
</dbReference>
<gene>
    <name type="primary">ytgA</name>
    <name type="ordered locus">STM4472</name>
</gene>
<proteinExistence type="predicted"/>
<accession>P0A1V0</accession>
<accession>Q08020</accession>
<feature type="chain" id="PRO_0000205375" description="Uncharacterized protein YtgA">
    <location>
        <begin position="1"/>
        <end position="162"/>
    </location>
</feature>
<name>YTGA_SALTY</name>